<sequence>MDSHFVYIVKCSDGSLYTGYAKDVNARVEKHNRGQGAKYTKVRRPVHLVYQEMYETKSEALKREYEIKTYTRQKKLRLIKER</sequence>
<accession>A7WYN2</accession>
<reference key="1">
    <citation type="journal article" date="2008" name="Antimicrob. Agents Chemother.">
        <title>Mutated response regulator graR is responsible for phenotypic conversion of Staphylococcus aureus from heterogeneous vancomycin-intermediate resistance to vancomycin-intermediate resistance.</title>
        <authorList>
            <person name="Neoh H.-M."/>
            <person name="Cui L."/>
            <person name="Yuzawa H."/>
            <person name="Takeuchi F."/>
            <person name="Matsuo M."/>
            <person name="Hiramatsu K."/>
        </authorList>
    </citation>
    <scope>NUCLEOTIDE SEQUENCE [LARGE SCALE GENOMIC DNA]</scope>
    <source>
        <strain>Mu3 / ATCC 700698</strain>
    </source>
</reference>
<feature type="chain" id="PRO_1000063685" description="UPF0213 protein SAHV_0485">
    <location>
        <begin position="1"/>
        <end position="82"/>
    </location>
</feature>
<feature type="domain" description="GIY-YIG" evidence="1">
    <location>
        <begin position="2"/>
        <end position="77"/>
    </location>
</feature>
<dbReference type="EMBL" id="AP009324">
    <property type="protein sequence ID" value="BAF77368.1"/>
    <property type="molecule type" value="Genomic_DNA"/>
</dbReference>
<dbReference type="RefSeq" id="WP_000377064.1">
    <property type="nucleotide sequence ID" value="NZ_CTYB01000022.1"/>
</dbReference>
<dbReference type="SMR" id="A7WYN2"/>
<dbReference type="KEGG" id="saw:SAHV_0485"/>
<dbReference type="HOGENOM" id="CLU_135650_0_3_9"/>
<dbReference type="CDD" id="cd10456">
    <property type="entry name" value="GIY-YIG_UPF0213"/>
    <property type="match status" value="1"/>
</dbReference>
<dbReference type="Gene3D" id="3.40.1440.10">
    <property type="entry name" value="GIY-YIG endonuclease"/>
    <property type="match status" value="1"/>
</dbReference>
<dbReference type="InterPro" id="IPR000305">
    <property type="entry name" value="GIY-YIG_endonuc"/>
</dbReference>
<dbReference type="InterPro" id="IPR035901">
    <property type="entry name" value="GIY-YIG_endonuc_sf"/>
</dbReference>
<dbReference type="InterPro" id="IPR050190">
    <property type="entry name" value="UPF0213_domain"/>
</dbReference>
<dbReference type="PANTHER" id="PTHR34477">
    <property type="entry name" value="UPF0213 PROTEIN YHBQ"/>
    <property type="match status" value="1"/>
</dbReference>
<dbReference type="PANTHER" id="PTHR34477:SF1">
    <property type="entry name" value="UPF0213 PROTEIN YHBQ"/>
    <property type="match status" value="1"/>
</dbReference>
<dbReference type="Pfam" id="PF01541">
    <property type="entry name" value="GIY-YIG"/>
    <property type="match status" value="1"/>
</dbReference>
<dbReference type="SMART" id="SM00465">
    <property type="entry name" value="GIYc"/>
    <property type="match status" value="1"/>
</dbReference>
<dbReference type="SUPFAM" id="SSF82771">
    <property type="entry name" value="GIY-YIG endonuclease"/>
    <property type="match status" value="1"/>
</dbReference>
<dbReference type="PROSITE" id="PS50164">
    <property type="entry name" value="GIY_YIG"/>
    <property type="match status" value="1"/>
</dbReference>
<evidence type="ECO:0000255" key="1">
    <source>
        <dbReference type="PROSITE-ProRule" id="PRU00977"/>
    </source>
</evidence>
<evidence type="ECO:0000305" key="2"/>
<comment type="similarity">
    <text evidence="2">Belongs to the UPF0213 family.</text>
</comment>
<organism>
    <name type="scientific">Staphylococcus aureus (strain Mu3 / ATCC 700698)</name>
    <dbReference type="NCBI Taxonomy" id="418127"/>
    <lineage>
        <taxon>Bacteria</taxon>
        <taxon>Bacillati</taxon>
        <taxon>Bacillota</taxon>
        <taxon>Bacilli</taxon>
        <taxon>Bacillales</taxon>
        <taxon>Staphylococcaceae</taxon>
        <taxon>Staphylococcus</taxon>
    </lineage>
</organism>
<gene>
    <name type="ordered locus">SAHV_0485</name>
</gene>
<proteinExistence type="inferred from homology"/>
<protein>
    <recommendedName>
        <fullName>UPF0213 protein SAHV_0485</fullName>
    </recommendedName>
</protein>
<name>Y485_STAA1</name>